<dbReference type="EC" id="3.13.2.1" evidence="1"/>
<dbReference type="EMBL" id="AE016824">
    <property type="protein sequence ID" value="AAS72112.1"/>
    <property type="molecule type" value="Genomic_DNA"/>
</dbReference>
<dbReference type="RefSeq" id="WP_000117570.1">
    <property type="nucleotide sequence ID" value="NC_005824.1"/>
</dbReference>
<dbReference type="SMR" id="Q75FU8"/>
<dbReference type="GeneID" id="61141279"/>
<dbReference type="KEGG" id="lic:LIC_20083"/>
<dbReference type="HOGENOM" id="CLU_025194_2_1_12"/>
<dbReference type="UniPathway" id="UPA00314">
    <property type="reaction ID" value="UER00076"/>
</dbReference>
<dbReference type="Proteomes" id="UP000007037">
    <property type="component" value="Chromosome II"/>
</dbReference>
<dbReference type="GO" id="GO:0005829">
    <property type="term" value="C:cytosol"/>
    <property type="evidence" value="ECO:0007669"/>
    <property type="project" value="TreeGrafter"/>
</dbReference>
<dbReference type="GO" id="GO:0004013">
    <property type="term" value="F:adenosylhomocysteinase activity"/>
    <property type="evidence" value="ECO:0007669"/>
    <property type="project" value="UniProtKB-UniRule"/>
</dbReference>
<dbReference type="GO" id="GO:0071269">
    <property type="term" value="P:L-homocysteine biosynthetic process"/>
    <property type="evidence" value="ECO:0007669"/>
    <property type="project" value="UniProtKB-UniRule"/>
</dbReference>
<dbReference type="GO" id="GO:0006730">
    <property type="term" value="P:one-carbon metabolic process"/>
    <property type="evidence" value="ECO:0007669"/>
    <property type="project" value="UniProtKB-KW"/>
</dbReference>
<dbReference type="GO" id="GO:0033353">
    <property type="term" value="P:S-adenosylmethionine cycle"/>
    <property type="evidence" value="ECO:0007669"/>
    <property type="project" value="TreeGrafter"/>
</dbReference>
<dbReference type="CDD" id="cd00401">
    <property type="entry name" value="SAHH"/>
    <property type="match status" value="1"/>
</dbReference>
<dbReference type="FunFam" id="3.40.50.1480:FF:000010">
    <property type="entry name" value="Adenosylhomocysteinase"/>
    <property type="match status" value="1"/>
</dbReference>
<dbReference type="FunFam" id="3.40.50.720:FF:000004">
    <property type="entry name" value="Adenosylhomocysteinase"/>
    <property type="match status" value="1"/>
</dbReference>
<dbReference type="Gene3D" id="3.40.50.1480">
    <property type="entry name" value="Adenosylhomocysteinase-like"/>
    <property type="match status" value="3"/>
</dbReference>
<dbReference type="Gene3D" id="3.40.50.720">
    <property type="entry name" value="NAD(P)-binding Rossmann-like Domain"/>
    <property type="match status" value="1"/>
</dbReference>
<dbReference type="HAMAP" id="MF_00563">
    <property type="entry name" value="AdoHcyase"/>
    <property type="match status" value="1"/>
</dbReference>
<dbReference type="InterPro" id="IPR042172">
    <property type="entry name" value="Adenosylhomocyst_ase-like_sf"/>
</dbReference>
<dbReference type="InterPro" id="IPR000043">
    <property type="entry name" value="Adenosylhomocysteinase-like"/>
</dbReference>
<dbReference type="InterPro" id="IPR015878">
    <property type="entry name" value="Ado_hCys_hydrolase_NAD-bd"/>
</dbReference>
<dbReference type="InterPro" id="IPR036291">
    <property type="entry name" value="NAD(P)-bd_dom_sf"/>
</dbReference>
<dbReference type="InterPro" id="IPR020082">
    <property type="entry name" value="S-Ado-L-homoCys_hydrolase_CS"/>
</dbReference>
<dbReference type="NCBIfam" id="TIGR00936">
    <property type="entry name" value="ahcY"/>
    <property type="match status" value="1"/>
</dbReference>
<dbReference type="NCBIfam" id="NF004005">
    <property type="entry name" value="PRK05476.2-3"/>
    <property type="match status" value="1"/>
</dbReference>
<dbReference type="PANTHER" id="PTHR23420">
    <property type="entry name" value="ADENOSYLHOMOCYSTEINASE"/>
    <property type="match status" value="1"/>
</dbReference>
<dbReference type="PANTHER" id="PTHR23420:SF0">
    <property type="entry name" value="ADENOSYLHOMOCYSTEINASE"/>
    <property type="match status" value="1"/>
</dbReference>
<dbReference type="Pfam" id="PF05221">
    <property type="entry name" value="AdoHcyase"/>
    <property type="match status" value="1"/>
</dbReference>
<dbReference type="Pfam" id="PF00670">
    <property type="entry name" value="AdoHcyase_NAD"/>
    <property type="match status" value="1"/>
</dbReference>
<dbReference type="PIRSF" id="PIRSF001109">
    <property type="entry name" value="Ad_hcy_hydrolase"/>
    <property type="match status" value="1"/>
</dbReference>
<dbReference type="SMART" id="SM00996">
    <property type="entry name" value="AdoHcyase"/>
    <property type="match status" value="1"/>
</dbReference>
<dbReference type="SMART" id="SM00997">
    <property type="entry name" value="AdoHcyase_NAD"/>
    <property type="match status" value="1"/>
</dbReference>
<dbReference type="SUPFAM" id="SSF52283">
    <property type="entry name" value="Formate/glycerate dehydrogenase catalytic domain-like"/>
    <property type="match status" value="1"/>
</dbReference>
<dbReference type="SUPFAM" id="SSF51735">
    <property type="entry name" value="NAD(P)-binding Rossmann-fold domains"/>
    <property type="match status" value="1"/>
</dbReference>
<dbReference type="PROSITE" id="PS00738">
    <property type="entry name" value="ADOHCYASE_1"/>
    <property type="match status" value="1"/>
</dbReference>
<dbReference type="PROSITE" id="PS00739">
    <property type="entry name" value="ADOHCYASE_2"/>
    <property type="match status" value="1"/>
</dbReference>
<name>SAHH_LEPIC</name>
<organism>
    <name type="scientific">Leptospira interrogans serogroup Icterohaemorrhagiae serovar copenhageni (strain Fiocruz L1-130)</name>
    <dbReference type="NCBI Taxonomy" id="267671"/>
    <lineage>
        <taxon>Bacteria</taxon>
        <taxon>Pseudomonadati</taxon>
        <taxon>Spirochaetota</taxon>
        <taxon>Spirochaetia</taxon>
        <taxon>Leptospirales</taxon>
        <taxon>Leptospiraceae</taxon>
        <taxon>Leptospira</taxon>
    </lineage>
</organism>
<feature type="chain" id="PRO_0000116965" description="Adenosylhomocysteinase">
    <location>
        <begin position="1"/>
        <end position="436"/>
    </location>
</feature>
<feature type="binding site" evidence="1">
    <location>
        <position position="62"/>
    </location>
    <ligand>
        <name>substrate</name>
    </ligand>
</feature>
<feature type="binding site" evidence="1">
    <location>
        <position position="136"/>
    </location>
    <ligand>
        <name>substrate</name>
    </ligand>
</feature>
<feature type="binding site" evidence="1">
    <location>
        <position position="161"/>
    </location>
    <ligand>
        <name>substrate</name>
    </ligand>
</feature>
<feature type="binding site" evidence="1">
    <location>
        <begin position="162"/>
        <end position="164"/>
    </location>
    <ligand>
        <name>NAD(+)</name>
        <dbReference type="ChEBI" id="CHEBI:57540"/>
    </ligand>
</feature>
<feature type="binding site" evidence="1">
    <location>
        <position position="191"/>
    </location>
    <ligand>
        <name>substrate</name>
    </ligand>
</feature>
<feature type="binding site" evidence="1">
    <location>
        <position position="195"/>
    </location>
    <ligand>
        <name>substrate</name>
    </ligand>
</feature>
<feature type="binding site" evidence="1">
    <location>
        <position position="196"/>
    </location>
    <ligand>
        <name>NAD(+)</name>
        <dbReference type="ChEBI" id="CHEBI:57540"/>
    </ligand>
</feature>
<feature type="binding site" evidence="1">
    <location>
        <begin position="225"/>
        <end position="230"/>
    </location>
    <ligand>
        <name>NAD(+)</name>
        <dbReference type="ChEBI" id="CHEBI:57540"/>
    </ligand>
</feature>
<feature type="binding site" evidence="1">
    <location>
        <position position="248"/>
    </location>
    <ligand>
        <name>NAD(+)</name>
        <dbReference type="ChEBI" id="CHEBI:57540"/>
    </ligand>
</feature>
<feature type="binding site" evidence="1">
    <location>
        <position position="283"/>
    </location>
    <ligand>
        <name>NAD(+)</name>
        <dbReference type="ChEBI" id="CHEBI:57540"/>
    </ligand>
</feature>
<feature type="binding site" evidence="1">
    <location>
        <begin position="304"/>
        <end position="306"/>
    </location>
    <ligand>
        <name>NAD(+)</name>
        <dbReference type="ChEBI" id="CHEBI:57540"/>
    </ligand>
</feature>
<feature type="binding site" evidence="1">
    <location>
        <position position="352"/>
    </location>
    <ligand>
        <name>NAD(+)</name>
        <dbReference type="ChEBI" id="CHEBI:57540"/>
    </ligand>
</feature>
<reference key="1">
    <citation type="journal article" date="2004" name="J. Bacteriol.">
        <title>Comparative genomics of two Leptospira interrogans serovars reveals novel insights into physiology and pathogenesis.</title>
        <authorList>
            <person name="Nascimento A.L.T.O."/>
            <person name="Ko A.I."/>
            <person name="Martins E.A.L."/>
            <person name="Monteiro-Vitorello C.B."/>
            <person name="Ho P.L."/>
            <person name="Haake D.A."/>
            <person name="Verjovski-Almeida S."/>
            <person name="Hartskeerl R.A."/>
            <person name="Marques M.V."/>
            <person name="Oliveira M.C."/>
            <person name="Menck C.F.M."/>
            <person name="Leite L.C.C."/>
            <person name="Carrer H."/>
            <person name="Coutinho L.L."/>
            <person name="Degrave W.M."/>
            <person name="Dellagostin O.A."/>
            <person name="El-Dorry H."/>
            <person name="Ferro E.S."/>
            <person name="Ferro M.I.T."/>
            <person name="Furlan L.R."/>
            <person name="Gamberini M."/>
            <person name="Giglioti E.A."/>
            <person name="Goes-Neto A."/>
            <person name="Goldman G.H."/>
            <person name="Goldman M.H.S."/>
            <person name="Harakava R."/>
            <person name="Jeronimo S.M.B."/>
            <person name="Junqueira-de-Azevedo I.L.M."/>
            <person name="Kimura E.T."/>
            <person name="Kuramae E.E."/>
            <person name="Lemos E.G.M."/>
            <person name="Lemos M.V.F."/>
            <person name="Marino C.L."/>
            <person name="Nunes L.R."/>
            <person name="de Oliveira R.C."/>
            <person name="Pereira G.G."/>
            <person name="Reis M.S."/>
            <person name="Schriefer A."/>
            <person name="Siqueira W.J."/>
            <person name="Sommer P."/>
            <person name="Tsai S.M."/>
            <person name="Simpson A.J.G."/>
            <person name="Ferro J.A."/>
            <person name="Camargo L.E.A."/>
            <person name="Kitajima J.P."/>
            <person name="Setubal J.C."/>
            <person name="Van Sluys M.A."/>
        </authorList>
    </citation>
    <scope>NUCLEOTIDE SEQUENCE [LARGE SCALE GENOMIC DNA]</scope>
    <source>
        <strain>Fiocruz L1-130</strain>
    </source>
</reference>
<protein>
    <recommendedName>
        <fullName evidence="1">Adenosylhomocysteinase</fullName>
        <ecNumber evidence="1">3.13.2.1</ecNumber>
    </recommendedName>
    <alternativeName>
        <fullName evidence="1">S-adenosyl-L-homocysteine hydrolase</fullName>
        <shortName evidence="1">AdoHcyase</shortName>
    </alternativeName>
</protein>
<gene>
    <name evidence="1" type="primary">ahcY</name>
    <name type="ordered locus">LIC_20083</name>
</gene>
<accession>Q75FU8</accession>
<sequence>MSVTTQEKDLSYKVKDLSQAEWGRQEIILAEKEMPGLMALRQEYKGKKPLAGARIAGSLHMTIQTAVLIETLTELGAEVRWSSCNIFSTQDHAAAAIAKAGIPVFAWKGETEEEYWWCIEQTIFFGDKGPNMILDDGGDLTAYIHEKYPKLLSEIRGISEETTTGVKSLYKLLKKGELKVPAFNVNDSVTKSKFDNLYGCRESLADGIKRATDVMLAGKVALVCGFGDVGKGSAASLRNFGARVIVTEIDPICALQASMEGYQVLRVEDIIEQVDIVVTATGNDDIITLEHMKAMKDGAILCNIGHFDTEIQMSRLNNEKGVTKKEIKPQVDKYTFPDGKSIIVLAEGRLVNLGCATGHPSFVMSCSFTNQVLAQIELYNNKYELGVYTLPKHLDEKVAALHLEQLGVRLTKLNQKQADYLGVPINGPFKPDHYRY</sequence>
<comment type="function">
    <text evidence="1">May play a key role in the regulation of the intracellular concentration of adenosylhomocysteine.</text>
</comment>
<comment type="catalytic activity">
    <reaction evidence="1">
        <text>S-adenosyl-L-homocysteine + H2O = L-homocysteine + adenosine</text>
        <dbReference type="Rhea" id="RHEA:21708"/>
        <dbReference type="ChEBI" id="CHEBI:15377"/>
        <dbReference type="ChEBI" id="CHEBI:16335"/>
        <dbReference type="ChEBI" id="CHEBI:57856"/>
        <dbReference type="ChEBI" id="CHEBI:58199"/>
        <dbReference type="EC" id="3.13.2.1"/>
    </reaction>
</comment>
<comment type="cofactor">
    <cofactor evidence="1">
        <name>NAD(+)</name>
        <dbReference type="ChEBI" id="CHEBI:57540"/>
    </cofactor>
    <text evidence="1">Binds 1 NAD(+) per subunit.</text>
</comment>
<comment type="pathway">
    <text evidence="1">Amino-acid biosynthesis; L-homocysteine biosynthesis; L-homocysteine from S-adenosyl-L-homocysteine: step 1/1.</text>
</comment>
<comment type="subcellular location">
    <subcellularLocation>
        <location evidence="1">Cytoplasm</location>
    </subcellularLocation>
</comment>
<comment type="similarity">
    <text evidence="1">Belongs to the adenosylhomocysteinase family.</text>
</comment>
<evidence type="ECO:0000255" key="1">
    <source>
        <dbReference type="HAMAP-Rule" id="MF_00563"/>
    </source>
</evidence>
<keyword id="KW-0963">Cytoplasm</keyword>
<keyword id="KW-0378">Hydrolase</keyword>
<keyword id="KW-0520">NAD</keyword>
<keyword id="KW-0554">One-carbon metabolism</keyword>
<proteinExistence type="inferred from homology"/>